<proteinExistence type="inferred from homology"/>
<accession>Q8FE66</accession>
<name>GCSH_ECOL6</name>
<evidence type="ECO:0000250" key="1"/>
<evidence type="ECO:0000255" key="2">
    <source>
        <dbReference type="HAMAP-Rule" id="MF_00272"/>
    </source>
</evidence>
<evidence type="ECO:0000255" key="3">
    <source>
        <dbReference type="PROSITE-ProRule" id="PRU01066"/>
    </source>
</evidence>
<evidence type="ECO:0000305" key="4"/>
<sequence>MSNIPAELKYSKEHEWLRKEADGTYTVGITEHAQELLGDMVFVDLPEVGATVSAGDDCAVAESVKAASDIYAPVSGEIVAVNDALSDSPELVNSEPYAGGWIFKIKASDESELESLLDATAYEALLEDE</sequence>
<feature type="initiator methionine" description="Removed" evidence="1">
    <location>
        <position position="1"/>
    </location>
</feature>
<feature type="chain" id="PRO_0000166220" description="Glycine cleavage system H protein">
    <location>
        <begin position="2"/>
        <end position="129"/>
    </location>
</feature>
<feature type="domain" description="Lipoyl-binding" evidence="3">
    <location>
        <begin position="24"/>
        <end position="106"/>
    </location>
</feature>
<feature type="modified residue" description="N6-lipoyllysine" evidence="2">
    <location>
        <position position="65"/>
    </location>
</feature>
<protein>
    <recommendedName>
        <fullName evidence="2">Glycine cleavage system H protein</fullName>
    </recommendedName>
</protein>
<comment type="function">
    <text evidence="2">The glycine cleavage system catalyzes the degradation of glycine. The H protein shuttles the methylamine group of glycine from the P protein to the T protein.</text>
</comment>
<comment type="cofactor">
    <cofactor evidence="2">
        <name>(R)-lipoate</name>
        <dbReference type="ChEBI" id="CHEBI:83088"/>
    </cofactor>
    <text evidence="2">Binds 1 lipoyl cofactor covalently.</text>
</comment>
<comment type="subunit">
    <text evidence="2">The glycine cleavage system is composed of four proteins: P, T, L and H.</text>
</comment>
<comment type="similarity">
    <text evidence="2">Belongs to the GcvH family.</text>
</comment>
<comment type="sequence caution" evidence="4">
    <conflict type="erroneous initiation">
        <sequence resource="EMBL-CDS" id="AAN81932"/>
    </conflict>
</comment>
<reference key="1">
    <citation type="journal article" date="2002" name="Proc. Natl. Acad. Sci. U.S.A.">
        <title>Extensive mosaic structure revealed by the complete genome sequence of uropathogenic Escherichia coli.</title>
        <authorList>
            <person name="Welch R.A."/>
            <person name="Burland V."/>
            <person name="Plunkett G. III"/>
            <person name="Redford P."/>
            <person name="Roesch P."/>
            <person name="Rasko D."/>
            <person name="Buckles E.L."/>
            <person name="Liou S.-R."/>
            <person name="Boutin A."/>
            <person name="Hackett J."/>
            <person name="Stroud D."/>
            <person name="Mayhew G.F."/>
            <person name="Rose D.J."/>
            <person name="Zhou S."/>
            <person name="Schwartz D.C."/>
            <person name="Perna N.T."/>
            <person name="Mobley H.L.T."/>
            <person name="Donnenberg M.S."/>
            <person name="Blattner F.R."/>
        </authorList>
    </citation>
    <scope>NUCLEOTIDE SEQUENCE [LARGE SCALE GENOMIC DNA]</scope>
    <source>
        <strain>CFT073 / ATCC 700928 / UPEC</strain>
    </source>
</reference>
<dbReference type="EMBL" id="AE014075">
    <property type="protein sequence ID" value="AAN81932.1"/>
    <property type="status" value="ALT_INIT"/>
    <property type="molecule type" value="Genomic_DNA"/>
</dbReference>
<dbReference type="RefSeq" id="WP_001305302.1">
    <property type="nucleotide sequence ID" value="NZ_CP051263.1"/>
</dbReference>
<dbReference type="SMR" id="Q8FE66"/>
<dbReference type="STRING" id="199310.c3484"/>
<dbReference type="KEGG" id="ecc:c3484"/>
<dbReference type="eggNOG" id="COG0509">
    <property type="taxonomic scope" value="Bacteria"/>
</dbReference>
<dbReference type="HOGENOM" id="CLU_097408_2_1_6"/>
<dbReference type="Proteomes" id="UP000001410">
    <property type="component" value="Chromosome"/>
</dbReference>
<dbReference type="GO" id="GO:0005829">
    <property type="term" value="C:cytosol"/>
    <property type="evidence" value="ECO:0007669"/>
    <property type="project" value="TreeGrafter"/>
</dbReference>
<dbReference type="GO" id="GO:0005960">
    <property type="term" value="C:glycine cleavage complex"/>
    <property type="evidence" value="ECO:0007669"/>
    <property type="project" value="InterPro"/>
</dbReference>
<dbReference type="GO" id="GO:0019464">
    <property type="term" value="P:glycine decarboxylation via glycine cleavage system"/>
    <property type="evidence" value="ECO:0007669"/>
    <property type="project" value="UniProtKB-UniRule"/>
</dbReference>
<dbReference type="CDD" id="cd06848">
    <property type="entry name" value="GCS_H"/>
    <property type="match status" value="1"/>
</dbReference>
<dbReference type="FunFam" id="2.40.50.100:FF:000011">
    <property type="entry name" value="Glycine cleavage system H protein"/>
    <property type="match status" value="1"/>
</dbReference>
<dbReference type="Gene3D" id="2.40.50.100">
    <property type="match status" value="1"/>
</dbReference>
<dbReference type="HAMAP" id="MF_00272">
    <property type="entry name" value="GcvH"/>
    <property type="match status" value="1"/>
</dbReference>
<dbReference type="InterPro" id="IPR003016">
    <property type="entry name" value="2-oxoA_DH_lipoyl-BS"/>
</dbReference>
<dbReference type="InterPro" id="IPR000089">
    <property type="entry name" value="Biotin_lipoyl"/>
</dbReference>
<dbReference type="InterPro" id="IPR002930">
    <property type="entry name" value="GCV_H"/>
</dbReference>
<dbReference type="InterPro" id="IPR033753">
    <property type="entry name" value="GCV_H/Fam206"/>
</dbReference>
<dbReference type="InterPro" id="IPR017453">
    <property type="entry name" value="GCV_H_sub"/>
</dbReference>
<dbReference type="InterPro" id="IPR011053">
    <property type="entry name" value="Single_hybrid_motif"/>
</dbReference>
<dbReference type="NCBIfam" id="TIGR00527">
    <property type="entry name" value="gcvH"/>
    <property type="match status" value="1"/>
</dbReference>
<dbReference type="NCBIfam" id="NF002270">
    <property type="entry name" value="PRK01202.1"/>
    <property type="match status" value="1"/>
</dbReference>
<dbReference type="PANTHER" id="PTHR11715">
    <property type="entry name" value="GLYCINE CLEAVAGE SYSTEM H PROTEIN"/>
    <property type="match status" value="1"/>
</dbReference>
<dbReference type="PANTHER" id="PTHR11715:SF3">
    <property type="entry name" value="GLYCINE CLEAVAGE SYSTEM H PROTEIN-RELATED"/>
    <property type="match status" value="1"/>
</dbReference>
<dbReference type="Pfam" id="PF01597">
    <property type="entry name" value="GCV_H"/>
    <property type="match status" value="1"/>
</dbReference>
<dbReference type="SUPFAM" id="SSF51230">
    <property type="entry name" value="Single hybrid motif"/>
    <property type="match status" value="1"/>
</dbReference>
<dbReference type="PROSITE" id="PS50968">
    <property type="entry name" value="BIOTINYL_LIPOYL"/>
    <property type="match status" value="1"/>
</dbReference>
<dbReference type="PROSITE" id="PS00189">
    <property type="entry name" value="LIPOYL"/>
    <property type="match status" value="1"/>
</dbReference>
<keyword id="KW-0450">Lipoyl</keyword>
<keyword id="KW-1185">Reference proteome</keyword>
<organism>
    <name type="scientific">Escherichia coli O6:H1 (strain CFT073 / ATCC 700928 / UPEC)</name>
    <dbReference type="NCBI Taxonomy" id="199310"/>
    <lineage>
        <taxon>Bacteria</taxon>
        <taxon>Pseudomonadati</taxon>
        <taxon>Pseudomonadota</taxon>
        <taxon>Gammaproteobacteria</taxon>
        <taxon>Enterobacterales</taxon>
        <taxon>Enterobacteriaceae</taxon>
        <taxon>Escherichia</taxon>
    </lineage>
</organism>
<gene>
    <name evidence="2" type="primary">gcvH</name>
    <name type="ordered locus">c3484</name>
</gene>